<dbReference type="EC" id="7.1.2.2" evidence="2"/>
<dbReference type="EMBL" id="CP000240">
    <property type="protein sequence ID" value="ABD03599.1"/>
    <property type="molecule type" value="Genomic_DNA"/>
</dbReference>
<dbReference type="RefSeq" id="WP_011434218.1">
    <property type="nucleotide sequence ID" value="NC_007776.1"/>
</dbReference>
<dbReference type="SMR" id="Q2JIG0"/>
<dbReference type="STRING" id="321332.CYB_2673"/>
<dbReference type="KEGG" id="cyb:CYB_2673"/>
<dbReference type="eggNOG" id="COG0056">
    <property type="taxonomic scope" value="Bacteria"/>
</dbReference>
<dbReference type="HOGENOM" id="CLU_010091_2_1_3"/>
<dbReference type="OrthoDB" id="9803053at2"/>
<dbReference type="Proteomes" id="UP000001938">
    <property type="component" value="Chromosome"/>
</dbReference>
<dbReference type="GO" id="GO:0031676">
    <property type="term" value="C:plasma membrane-derived thylakoid membrane"/>
    <property type="evidence" value="ECO:0007669"/>
    <property type="project" value="UniProtKB-SubCell"/>
</dbReference>
<dbReference type="GO" id="GO:0045259">
    <property type="term" value="C:proton-transporting ATP synthase complex"/>
    <property type="evidence" value="ECO:0007669"/>
    <property type="project" value="UniProtKB-KW"/>
</dbReference>
<dbReference type="GO" id="GO:0043531">
    <property type="term" value="F:ADP binding"/>
    <property type="evidence" value="ECO:0007669"/>
    <property type="project" value="TreeGrafter"/>
</dbReference>
<dbReference type="GO" id="GO:0005524">
    <property type="term" value="F:ATP binding"/>
    <property type="evidence" value="ECO:0007669"/>
    <property type="project" value="UniProtKB-UniRule"/>
</dbReference>
<dbReference type="GO" id="GO:0046933">
    <property type="term" value="F:proton-transporting ATP synthase activity, rotational mechanism"/>
    <property type="evidence" value="ECO:0007669"/>
    <property type="project" value="UniProtKB-UniRule"/>
</dbReference>
<dbReference type="CDD" id="cd18113">
    <property type="entry name" value="ATP-synt_F1_alpha_C"/>
    <property type="match status" value="1"/>
</dbReference>
<dbReference type="CDD" id="cd18116">
    <property type="entry name" value="ATP-synt_F1_alpha_N"/>
    <property type="match status" value="1"/>
</dbReference>
<dbReference type="CDD" id="cd01132">
    <property type="entry name" value="F1-ATPase_alpha_CD"/>
    <property type="match status" value="1"/>
</dbReference>
<dbReference type="FunFam" id="1.20.150.20:FF:000001">
    <property type="entry name" value="ATP synthase subunit alpha"/>
    <property type="match status" value="1"/>
</dbReference>
<dbReference type="FunFam" id="2.40.30.20:FF:000001">
    <property type="entry name" value="ATP synthase subunit alpha"/>
    <property type="match status" value="1"/>
</dbReference>
<dbReference type="FunFam" id="3.40.50.300:FF:000002">
    <property type="entry name" value="ATP synthase subunit alpha"/>
    <property type="match status" value="1"/>
</dbReference>
<dbReference type="Gene3D" id="2.40.30.20">
    <property type="match status" value="1"/>
</dbReference>
<dbReference type="Gene3D" id="1.20.150.20">
    <property type="entry name" value="ATP synthase alpha/beta chain, C-terminal domain"/>
    <property type="match status" value="1"/>
</dbReference>
<dbReference type="Gene3D" id="3.40.50.300">
    <property type="entry name" value="P-loop containing nucleotide triphosphate hydrolases"/>
    <property type="match status" value="1"/>
</dbReference>
<dbReference type="HAMAP" id="MF_01346">
    <property type="entry name" value="ATP_synth_alpha_bact"/>
    <property type="match status" value="1"/>
</dbReference>
<dbReference type="InterPro" id="IPR023366">
    <property type="entry name" value="ATP_synth_asu-like_sf"/>
</dbReference>
<dbReference type="InterPro" id="IPR000793">
    <property type="entry name" value="ATP_synth_asu_C"/>
</dbReference>
<dbReference type="InterPro" id="IPR038376">
    <property type="entry name" value="ATP_synth_asu_C_sf"/>
</dbReference>
<dbReference type="InterPro" id="IPR033732">
    <property type="entry name" value="ATP_synth_F1_a_nt-bd_dom"/>
</dbReference>
<dbReference type="InterPro" id="IPR005294">
    <property type="entry name" value="ATP_synth_F1_asu"/>
</dbReference>
<dbReference type="InterPro" id="IPR020003">
    <property type="entry name" value="ATPase_a/bsu_AS"/>
</dbReference>
<dbReference type="InterPro" id="IPR004100">
    <property type="entry name" value="ATPase_F1/V1/A1_a/bsu_N"/>
</dbReference>
<dbReference type="InterPro" id="IPR036121">
    <property type="entry name" value="ATPase_F1/V1/A1_a/bsu_N_sf"/>
</dbReference>
<dbReference type="InterPro" id="IPR000194">
    <property type="entry name" value="ATPase_F1/V1/A1_a/bsu_nucl-bd"/>
</dbReference>
<dbReference type="InterPro" id="IPR027417">
    <property type="entry name" value="P-loop_NTPase"/>
</dbReference>
<dbReference type="NCBIfam" id="TIGR00962">
    <property type="entry name" value="atpA"/>
    <property type="match status" value="1"/>
</dbReference>
<dbReference type="NCBIfam" id="NF009884">
    <property type="entry name" value="PRK13343.1"/>
    <property type="match status" value="1"/>
</dbReference>
<dbReference type="PANTHER" id="PTHR48082">
    <property type="entry name" value="ATP SYNTHASE SUBUNIT ALPHA, MITOCHONDRIAL"/>
    <property type="match status" value="1"/>
</dbReference>
<dbReference type="PANTHER" id="PTHR48082:SF2">
    <property type="entry name" value="ATP SYNTHASE SUBUNIT ALPHA, MITOCHONDRIAL"/>
    <property type="match status" value="1"/>
</dbReference>
<dbReference type="Pfam" id="PF00006">
    <property type="entry name" value="ATP-synt_ab"/>
    <property type="match status" value="1"/>
</dbReference>
<dbReference type="Pfam" id="PF00306">
    <property type="entry name" value="ATP-synt_ab_C"/>
    <property type="match status" value="1"/>
</dbReference>
<dbReference type="Pfam" id="PF02874">
    <property type="entry name" value="ATP-synt_ab_N"/>
    <property type="match status" value="1"/>
</dbReference>
<dbReference type="PIRSF" id="PIRSF039088">
    <property type="entry name" value="F_ATPase_subunit_alpha"/>
    <property type="match status" value="1"/>
</dbReference>
<dbReference type="SUPFAM" id="SSF47917">
    <property type="entry name" value="C-terminal domain of alpha and beta subunits of F1 ATP synthase"/>
    <property type="match status" value="1"/>
</dbReference>
<dbReference type="SUPFAM" id="SSF50615">
    <property type="entry name" value="N-terminal domain of alpha and beta subunits of F1 ATP synthase"/>
    <property type="match status" value="1"/>
</dbReference>
<dbReference type="SUPFAM" id="SSF52540">
    <property type="entry name" value="P-loop containing nucleoside triphosphate hydrolases"/>
    <property type="match status" value="1"/>
</dbReference>
<dbReference type="PROSITE" id="PS00152">
    <property type="entry name" value="ATPASE_ALPHA_BETA"/>
    <property type="match status" value="1"/>
</dbReference>
<reference key="1">
    <citation type="journal article" date="2007" name="ISME J.">
        <title>Population level functional diversity in a microbial community revealed by comparative genomic and metagenomic analyses.</title>
        <authorList>
            <person name="Bhaya D."/>
            <person name="Grossman A.R."/>
            <person name="Steunou A.-S."/>
            <person name="Khuri N."/>
            <person name="Cohan F.M."/>
            <person name="Hamamura N."/>
            <person name="Melendrez M.C."/>
            <person name="Bateson M.M."/>
            <person name="Ward D.M."/>
            <person name="Heidelberg J.F."/>
        </authorList>
    </citation>
    <scope>NUCLEOTIDE SEQUENCE [LARGE SCALE GENOMIC DNA]</scope>
    <source>
        <strain>JA-2-3B'a(2-13)</strain>
    </source>
</reference>
<name>ATPA_SYNJB</name>
<protein>
    <recommendedName>
        <fullName evidence="2">ATP synthase subunit alpha</fullName>
        <ecNumber evidence="2">7.1.2.2</ecNumber>
    </recommendedName>
    <alternativeName>
        <fullName evidence="2">ATP synthase F1 sector subunit alpha</fullName>
    </alternativeName>
    <alternativeName>
        <fullName evidence="2">F-ATPase subunit alpha</fullName>
    </alternativeName>
</protein>
<keyword id="KW-0066">ATP synthesis</keyword>
<keyword id="KW-0067">ATP-binding</keyword>
<keyword id="KW-0139">CF(1)</keyword>
<keyword id="KW-0375">Hydrogen ion transport</keyword>
<keyword id="KW-0406">Ion transport</keyword>
<keyword id="KW-0472">Membrane</keyword>
<keyword id="KW-0547">Nucleotide-binding</keyword>
<keyword id="KW-1185">Reference proteome</keyword>
<keyword id="KW-0793">Thylakoid</keyword>
<keyword id="KW-1278">Translocase</keyword>
<keyword id="KW-0813">Transport</keyword>
<accession>Q2JIG0</accession>
<sequence length="506" mass="54723">MPTIRPDEISTIIKQQIEQYNQEMQVSNVGTVLQVGDGIARIYGLDKVMASELLEFEDGTTGIALNLEEDNIGAVLIGSGRNIQEGSTVKSTGKIASIPVGEALLGRVVDPLCNPLDGKGPIQCTESRLIESPAPGIVDRRSVYEPLQTGITAIDALIPIGRGQRELIIGDRQTGKTTVAVDTILNQKGQDVICIYVAIGQKQSTIAQVVGILTERGAMDYSIVVAAGADSPAPLQWLAPYCGATIAEYFMYQGKHTLVVYDDLSKQAVAYRQMSLLLRRPPGREAYPGDVFYLHSRLLERAAKLSSQLGEGSMTALPIVETQANDVSAYIPTNVISITDGQIFLESDLFNAGIRPAINVGISVSRVGSAAQTKAMKKVAGSIKVELAQYRDLEAFAQFASDLDEATQKQLARGQRLQELLKQPQYSPLSLDQQVAIIYAGTRGYLDDIPVEKVSSFKQGLLAYLGTTHPKYGEIVLSTKQLTDEAEEILKTAITEFKQSFVAKAA</sequence>
<organism>
    <name type="scientific">Synechococcus sp. (strain JA-2-3B'a(2-13))</name>
    <name type="common">Cyanobacteria bacterium Yellowstone B-Prime</name>
    <dbReference type="NCBI Taxonomy" id="321332"/>
    <lineage>
        <taxon>Bacteria</taxon>
        <taxon>Bacillati</taxon>
        <taxon>Cyanobacteriota</taxon>
        <taxon>Cyanophyceae</taxon>
        <taxon>Synechococcales</taxon>
        <taxon>Synechococcaceae</taxon>
        <taxon>Synechococcus</taxon>
    </lineage>
</organism>
<proteinExistence type="inferred from homology"/>
<comment type="function">
    <text evidence="2">Produces ATP from ADP in the presence of a proton gradient across the membrane. The alpha chain is a regulatory subunit.</text>
</comment>
<comment type="catalytic activity">
    <reaction evidence="2">
        <text>ATP + H2O + 4 H(+)(in) = ADP + phosphate + 5 H(+)(out)</text>
        <dbReference type="Rhea" id="RHEA:57720"/>
        <dbReference type="ChEBI" id="CHEBI:15377"/>
        <dbReference type="ChEBI" id="CHEBI:15378"/>
        <dbReference type="ChEBI" id="CHEBI:30616"/>
        <dbReference type="ChEBI" id="CHEBI:43474"/>
        <dbReference type="ChEBI" id="CHEBI:456216"/>
        <dbReference type="EC" id="7.1.2.2"/>
    </reaction>
</comment>
<comment type="subunit">
    <text evidence="1">F-type ATPases have 2 components, CF(1) - the catalytic core - and CF(0) - the membrane proton channel. CF(1) has five subunits: alpha(3), beta(3), gamma(1), delta(1), epsilon(1). CF(0) has four main subunits: a(1), b(1), b'(1) and c(9-12) (By similarity).</text>
</comment>
<comment type="subcellular location">
    <subcellularLocation>
        <location evidence="2">Cellular thylakoid membrane</location>
        <topology evidence="2">Peripheral membrane protein</topology>
    </subcellularLocation>
</comment>
<comment type="similarity">
    <text evidence="2">Belongs to the ATPase alpha/beta chains family.</text>
</comment>
<evidence type="ECO:0000250" key="1"/>
<evidence type="ECO:0000255" key="2">
    <source>
        <dbReference type="HAMAP-Rule" id="MF_01346"/>
    </source>
</evidence>
<gene>
    <name evidence="2" type="primary">atpA</name>
    <name type="ordered locus">CYB_2673</name>
</gene>
<feature type="chain" id="PRO_0000238379" description="ATP synthase subunit alpha">
    <location>
        <begin position="1"/>
        <end position="506"/>
    </location>
</feature>
<feature type="binding site" evidence="2">
    <location>
        <begin position="170"/>
        <end position="177"/>
    </location>
    <ligand>
        <name>ATP</name>
        <dbReference type="ChEBI" id="CHEBI:30616"/>
    </ligand>
</feature>
<feature type="site" description="Required for activity" evidence="2">
    <location>
        <position position="363"/>
    </location>
</feature>